<keyword id="KW-0028">Amino-acid biosynthesis</keyword>
<keyword id="KW-0100">Branched-chain amino acid biosynthesis</keyword>
<keyword id="KW-0460">Magnesium</keyword>
<keyword id="KW-0479">Metal-binding</keyword>
<keyword id="KW-0521">NADP</keyword>
<keyword id="KW-0560">Oxidoreductase</keyword>
<feature type="chain" id="PRO_1000080624" description="Ketol-acid reductoisomerase (NADP(+))">
    <location>
        <begin position="1"/>
        <end position="334"/>
    </location>
</feature>
<feature type="domain" description="KARI N-terminal Rossmann" evidence="2">
    <location>
        <begin position="2"/>
        <end position="182"/>
    </location>
</feature>
<feature type="domain" description="KARI C-terminal knotted" evidence="3">
    <location>
        <begin position="183"/>
        <end position="328"/>
    </location>
</feature>
<feature type="active site" evidence="1">
    <location>
        <position position="108"/>
    </location>
</feature>
<feature type="binding site" evidence="1">
    <location>
        <begin position="25"/>
        <end position="28"/>
    </location>
    <ligand>
        <name>NADP(+)</name>
        <dbReference type="ChEBI" id="CHEBI:58349"/>
    </ligand>
</feature>
<feature type="binding site" evidence="1">
    <location>
        <position position="51"/>
    </location>
    <ligand>
        <name>NADP(+)</name>
        <dbReference type="ChEBI" id="CHEBI:58349"/>
    </ligand>
</feature>
<feature type="binding site" evidence="1">
    <location>
        <position position="53"/>
    </location>
    <ligand>
        <name>NADP(+)</name>
        <dbReference type="ChEBI" id="CHEBI:58349"/>
    </ligand>
</feature>
<feature type="binding site" evidence="1">
    <location>
        <begin position="83"/>
        <end position="86"/>
    </location>
    <ligand>
        <name>NADP(+)</name>
        <dbReference type="ChEBI" id="CHEBI:58349"/>
    </ligand>
</feature>
<feature type="binding site" evidence="1">
    <location>
        <position position="134"/>
    </location>
    <ligand>
        <name>NADP(+)</name>
        <dbReference type="ChEBI" id="CHEBI:58349"/>
    </ligand>
</feature>
<feature type="binding site" evidence="1">
    <location>
        <position position="191"/>
    </location>
    <ligand>
        <name>Mg(2+)</name>
        <dbReference type="ChEBI" id="CHEBI:18420"/>
        <label>1</label>
    </ligand>
</feature>
<feature type="binding site" evidence="1">
    <location>
        <position position="191"/>
    </location>
    <ligand>
        <name>Mg(2+)</name>
        <dbReference type="ChEBI" id="CHEBI:18420"/>
        <label>2</label>
    </ligand>
</feature>
<feature type="binding site" evidence="1">
    <location>
        <position position="195"/>
    </location>
    <ligand>
        <name>Mg(2+)</name>
        <dbReference type="ChEBI" id="CHEBI:18420"/>
        <label>1</label>
    </ligand>
</feature>
<feature type="binding site" evidence="1">
    <location>
        <position position="227"/>
    </location>
    <ligand>
        <name>Mg(2+)</name>
        <dbReference type="ChEBI" id="CHEBI:18420"/>
        <label>2</label>
    </ligand>
</feature>
<feature type="binding site" evidence="1">
    <location>
        <position position="231"/>
    </location>
    <ligand>
        <name>Mg(2+)</name>
        <dbReference type="ChEBI" id="CHEBI:18420"/>
        <label>2</label>
    </ligand>
</feature>
<feature type="binding site" evidence="1">
    <location>
        <position position="252"/>
    </location>
    <ligand>
        <name>substrate</name>
    </ligand>
</feature>
<evidence type="ECO:0000255" key="1">
    <source>
        <dbReference type="HAMAP-Rule" id="MF_00435"/>
    </source>
</evidence>
<evidence type="ECO:0000255" key="2">
    <source>
        <dbReference type="PROSITE-ProRule" id="PRU01197"/>
    </source>
</evidence>
<evidence type="ECO:0000255" key="3">
    <source>
        <dbReference type="PROSITE-ProRule" id="PRU01198"/>
    </source>
</evidence>
<reference key="1">
    <citation type="submission" date="2007-06" db="EMBL/GenBank/DDBJ databases">
        <title>Complete sequence of Clostridium beijerinckii NCIMB 8052.</title>
        <authorList>
            <consortium name="US DOE Joint Genome Institute"/>
            <person name="Copeland A."/>
            <person name="Lucas S."/>
            <person name="Lapidus A."/>
            <person name="Barry K."/>
            <person name="Detter J.C."/>
            <person name="Glavina del Rio T."/>
            <person name="Hammon N."/>
            <person name="Israni S."/>
            <person name="Dalin E."/>
            <person name="Tice H."/>
            <person name="Pitluck S."/>
            <person name="Sims D."/>
            <person name="Brettin T."/>
            <person name="Bruce D."/>
            <person name="Tapia R."/>
            <person name="Brainard J."/>
            <person name="Schmutz J."/>
            <person name="Larimer F."/>
            <person name="Land M."/>
            <person name="Hauser L."/>
            <person name="Kyrpides N."/>
            <person name="Mikhailova N."/>
            <person name="Bennet G."/>
            <person name="Cann I."/>
            <person name="Chen J.-S."/>
            <person name="Contreras A.L."/>
            <person name="Jones D."/>
            <person name="Kashket E."/>
            <person name="Mitchell W."/>
            <person name="Stoddard S."/>
            <person name="Schwarz W."/>
            <person name="Qureshi N."/>
            <person name="Young M."/>
            <person name="Shi Z."/>
            <person name="Ezeji T."/>
            <person name="White B."/>
            <person name="Blaschek H."/>
            <person name="Richardson P."/>
        </authorList>
    </citation>
    <scope>NUCLEOTIDE SEQUENCE [LARGE SCALE GENOMIC DNA]</scope>
    <source>
        <strain>ATCC 51743 / NCIMB 8052</strain>
    </source>
</reference>
<gene>
    <name evidence="1" type="primary">ilvC</name>
    <name type="ordered locus">Cbei_0218</name>
</gene>
<organism>
    <name type="scientific">Clostridium beijerinckii (strain ATCC 51743 / NCIMB 8052)</name>
    <name type="common">Clostridium acetobutylicum</name>
    <dbReference type="NCBI Taxonomy" id="290402"/>
    <lineage>
        <taxon>Bacteria</taxon>
        <taxon>Bacillati</taxon>
        <taxon>Bacillota</taxon>
        <taxon>Clostridia</taxon>
        <taxon>Eubacteriales</taxon>
        <taxon>Clostridiaceae</taxon>
        <taxon>Clostridium</taxon>
    </lineage>
</organism>
<name>ILVC_CLOB8</name>
<dbReference type="EC" id="1.1.1.86" evidence="1"/>
<dbReference type="EMBL" id="CP000721">
    <property type="protein sequence ID" value="ABR32408.1"/>
    <property type="molecule type" value="Genomic_DNA"/>
</dbReference>
<dbReference type="RefSeq" id="WP_011967570.1">
    <property type="nucleotide sequence ID" value="NC_009617.1"/>
</dbReference>
<dbReference type="SMR" id="A6LPX8"/>
<dbReference type="KEGG" id="cbe:Cbei_0218"/>
<dbReference type="eggNOG" id="COG0059">
    <property type="taxonomic scope" value="Bacteria"/>
</dbReference>
<dbReference type="HOGENOM" id="CLU_033821_0_1_9"/>
<dbReference type="UniPathway" id="UPA00047">
    <property type="reaction ID" value="UER00056"/>
</dbReference>
<dbReference type="UniPathway" id="UPA00049">
    <property type="reaction ID" value="UER00060"/>
</dbReference>
<dbReference type="Proteomes" id="UP000000565">
    <property type="component" value="Chromosome"/>
</dbReference>
<dbReference type="GO" id="GO:0005829">
    <property type="term" value="C:cytosol"/>
    <property type="evidence" value="ECO:0007669"/>
    <property type="project" value="TreeGrafter"/>
</dbReference>
<dbReference type="GO" id="GO:0004455">
    <property type="term" value="F:ketol-acid reductoisomerase activity"/>
    <property type="evidence" value="ECO:0007669"/>
    <property type="project" value="UniProtKB-UniRule"/>
</dbReference>
<dbReference type="GO" id="GO:0000287">
    <property type="term" value="F:magnesium ion binding"/>
    <property type="evidence" value="ECO:0007669"/>
    <property type="project" value="UniProtKB-UniRule"/>
</dbReference>
<dbReference type="GO" id="GO:0050661">
    <property type="term" value="F:NADP binding"/>
    <property type="evidence" value="ECO:0007669"/>
    <property type="project" value="InterPro"/>
</dbReference>
<dbReference type="GO" id="GO:0009097">
    <property type="term" value="P:isoleucine biosynthetic process"/>
    <property type="evidence" value="ECO:0007669"/>
    <property type="project" value="UniProtKB-UniRule"/>
</dbReference>
<dbReference type="GO" id="GO:0009099">
    <property type="term" value="P:L-valine biosynthetic process"/>
    <property type="evidence" value="ECO:0007669"/>
    <property type="project" value="UniProtKB-UniRule"/>
</dbReference>
<dbReference type="FunFam" id="3.40.50.720:FF:000023">
    <property type="entry name" value="Ketol-acid reductoisomerase (NADP(+))"/>
    <property type="match status" value="1"/>
</dbReference>
<dbReference type="Gene3D" id="6.10.240.10">
    <property type="match status" value="1"/>
</dbReference>
<dbReference type="Gene3D" id="3.40.50.720">
    <property type="entry name" value="NAD(P)-binding Rossmann-like Domain"/>
    <property type="match status" value="1"/>
</dbReference>
<dbReference type="HAMAP" id="MF_00435">
    <property type="entry name" value="IlvC"/>
    <property type="match status" value="1"/>
</dbReference>
<dbReference type="InterPro" id="IPR008927">
    <property type="entry name" value="6-PGluconate_DH-like_C_sf"/>
</dbReference>
<dbReference type="InterPro" id="IPR013023">
    <property type="entry name" value="KARI"/>
</dbReference>
<dbReference type="InterPro" id="IPR000506">
    <property type="entry name" value="KARI_C"/>
</dbReference>
<dbReference type="InterPro" id="IPR013116">
    <property type="entry name" value="KARI_N"/>
</dbReference>
<dbReference type="InterPro" id="IPR014359">
    <property type="entry name" value="KARI_prok"/>
</dbReference>
<dbReference type="InterPro" id="IPR036291">
    <property type="entry name" value="NAD(P)-bd_dom_sf"/>
</dbReference>
<dbReference type="NCBIfam" id="TIGR00465">
    <property type="entry name" value="ilvC"/>
    <property type="match status" value="1"/>
</dbReference>
<dbReference type="NCBIfam" id="NF004017">
    <property type="entry name" value="PRK05479.1"/>
    <property type="match status" value="1"/>
</dbReference>
<dbReference type="NCBIfam" id="NF009940">
    <property type="entry name" value="PRK13403.1"/>
    <property type="match status" value="1"/>
</dbReference>
<dbReference type="PANTHER" id="PTHR21371">
    <property type="entry name" value="KETOL-ACID REDUCTOISOMERASE, MITOCHONDRIAL"/>
    <property type="match status" value="1"/>
</dbReference>
<dbReference type="PANTHER" id="PTHR21371:SF1">
    <property type="entry name" value="KETOL-ACID REDUCTOISOMERASE, MITOCHONDRIAL"/>
    <property type="match status" value="1"/>
</dbReference>
<dbReference type="Pfam" id="PF01450">
    <property type="entry name" value="KARI_C"/>
    <property type="match status" value="1"/>
</dbReference>
<dbReference type="Pfam" id="PF07991">
    <property type="entry name" value="KARI_N"/>
    <property type="match status" value="1"/>
</dbReference>
<dbReference type="PIRSF" id="PIRSF000116">
    <property type="entry name" value="IlvC_gammaproteo"/>
    <property type="match status" value="1"/>
</dbReference>
<dbReference type="SUPFAM" id="SSF48179">
    <property type="entry name" value="6-phosphogluconate dehydrogenase C-terminal domain-like"/>
    <property type="match status" value="1"/>
</dbReference>
<dbReference type="SUPFAM" id="SSF51735">
    <property type="entry name" value="NAD(P)-binding Rossmann-fold domains"/>
    <property type="match status" value="1"/>
</dbReference>
<dbReference type="PROSITE" id="PS51851">
    <property type="entry name" value="KARI_C"/>
    <property type="match status" value="1"/>
</dbReference>
<dbReference type="PROSITE" id="PS51850">
    <property type="entry name" value="KARI_N"/>
    <property type="match status" value="1"/>
</dbReference>
<sequence length="334" mass="36656">MPKMYYEKDTDLNLLRGKKVAIIGYGSQGHAHALNLHESGVDVVVGLYNGSKSWAKAEAAGLQVATVADAAKAADLIMILLPDEKQAKIYNEEIAPNLEEGNALVFAHGFNIHFGQVVPPSYVDVFMVAPKGPGHLVRRTYTEGAGVPCLIAVHQDATGKAKQYALAYANGIGGARAGVLETTFKDETETDLFGEQAVLCGGVSELIKAGFETLVEAGYAPENAYFECMHEMKLIVDLLYQGGLSMMRYSISDTAEYGDYQIGRRIITDETKKEMKKVLTEIQDGTFAKNWLLENQTNRPGFNARRRMEAEHPIEKVGKELRGMMSWIDTAKVD</sequence>
<proteinExistence type="inferred from homology"/>
<comment type="function">
    <text evidence="1">Involved in the biosynthesis of branched-chain amino acids (BCAA). Catalyzes an alkyl-migration followed by a ketol-acid reduction of (S)-2-acetolactate (S2AL) to yield (R)-2,3-dihydroxy-isovalerate. In the isomerase reaction, S2AL is rearranged via a Mg-dependent methyl migration to produce 3-hydroxy-3-methyl-2-ketobutyrate (HMKB). In the reductase reaction, this 2-ketoacid undergoes a metal-dependent reduction by NADPH to yield (R)-2,3-dihydroxy-isovalerate.</text>
</comment>
<comment type="catalytic activity">
    <reaction evidence="1">
        <text>(2R)-2,3-dihydroxy-3-methylbutanoate + NADP(+) = (2S)-2-acetolactate + NADPH + H(+)</text>
        <dbReference type="Rhea" id="RHEA:22068"/>
        <dbReference type="ChEBI" id="CHEBI:15378"/>
        <dbReference type="ChEBI" id="CHEBI:49072"/>
        <dbReference type="ChEBI" id="CHEBI:57783"/>
        <dbReference type="ChEBI" id="CHEBI:58349"/>
        <dbReference type="ChEBI" id="CHEBI:58476"/>
        <dbReference type="EC" id="1.1.1.86"/>
    </reaction>
</comment>
<comment type="catalytic activity">
    <reaction evidence="1">
        <text>(2R,3R)-2,3-dihydroxy-3-methylpentanoate + NADP(+) = (S)-2-ethyl-2-hydroxy-3-oxobutanoate + NADPH + H(+)</text>
        <dbReference type="Rhea" id="RHEA:13493"/>
        <dbReference type="ChEBI" id="CHEBI:15378"/>
        <dbReference type="ChEBI" id="CHEBI:49256"/>
        <dbReference type="ChEBI" id="CHEBI:49258"/>
        <dbReference type="ChEBI" id="CHEBI:57783"/>
        <dbReference type="ChEBI" id="CHEBI:58349"/>
        <dbReference type="EC" id="1.1.1.86"/>
    </reaction>
</comment>
<comment type="cofactor">
    <cofactor evidence="1">
        <name>Mg(2+)</name>
        <dbReference type="ChEBI" id="CHEBI:18420"/>
    </cofactor>
    <text evidence="1">Binds 2 magnesium ions per subunit.</text>
</comment>
<comment type="pathway">
    <text evidence="1">Amino-acid biosynthesis; L-isoleucine biosynthesis; L-isoleucine from 2-oxobutanoate: step 2/4.</text>
</comment>
<comment type="pathway">
    <text evidence="1">Amino-acid biosynthesis; L-valine biosynthesis; L-valine from pyruvate: step 2/4.</text>
</comment>
<comment type="similarity">
    <text evidence="1">Belongs to the ketol-acid reductoisomerase family.</text>
</comment>
<accession>A6LPX8</accession>
<protein>
    <recommendedName>
        <fullName evidence="1">Ketol-acid reductoisomerase (NADP(+))</fullName>
        <shortName evidence="1">KARI</shortName>
        <ecNumber evidence="1">1.1.1.86</ecNumber>
    </recommendedName>
    <alternativeName>
        <fullName evidence="1">Acetohydroxy-acid isomeroreductase</fullName>
        <shortName evidence="1">AHIR</shortName>
    </alternativeName>
    <alternativeName>
        <fullName evidence="1">Alpha-keto-beta-hydroxylacyl reductoisomerase</fullName>
    </alternativeName>
    <alternativeName>
        <fullName evidence="1">Ketol-acid reductoisomerase type 1</fullName>
    </alternativeName>
    <alternativeName>
        <fullName evidence="1">Ketol-acid reductoisomerase type I</fullName>
    </alternativeName>
</protein>